<protein>
    <recommendedName>
        <fullName evidence="1">Thiazole synthase</fullName>
        <ecNumber evidence="1">2.8.1.10</ecNumber>
    </recommendedName>
</protein>
<gene>
    <name evidence="1" type="primary">thiG</name>
    <name type="ordered locus">BMA2728</name>
</gene>
<name>THIG_BURMA</name>
<dbReference type="EC" id="2.8.1.10" evidence="1"/>
<dbReference type="EMBL" id="CP000010">
    <property type="protein sequence ID" value="AAU48295.1"/>
    <property type="molecule type" value="Genomic_DNA"/>
</dbReference>
<dbReference type="RefSeq" id="WP_004199935.1">
    <property type="nucleotide sequence ID" value="NC_006348.1"/>
</dbReference>
<dbReference type="RefSeq" id="YP_104248.1">
    <property type="nucleotide sequence ID" value="NC_006348.1"/>
</dbReference>
<dbReference type="SMR" id="Q62GC6"/>
<dbReference type="KEGG" id="bma:BMA2728"/>
<dbReference type="PATRIC" id="fig|243160.12.peg.2797"/>
<dbReference type="eggNOG" id="COG2022">
    <property type="taxonomic scope" value="Bacteria"/>
</dbReference>
<dbReference type="HOGENOM" id="CLU_062233_1_0_4"/>
<dbReference type="UniPathway" id="UPA00060"/>
<dbReference type="Proteomes" id="UP000006693">
    <property type="component" value="Chromosome 1"/>
</dbReference>
<dbReference type="GO" id="GO:0005737">
    <property type="term" value="C:cytoplasm"/>
    <property type="evidence" value="ECO:0007669"/>
    <property type="project" value="UniProtKB-SubCell"/>
</dbReference>
<dbReference type="GO" id="GO:1990107">
    <property type="term" value="F:thiazole synthase activity"/>
    <property type="evidence" value="ECO:0007669"/>
    <property type="project" value="UniProtKB-EC"/>
</dbReference>
<dbReference type="GO" id="GO:0009229">
    <property type="term" value="P:thiamine diphosphate biosynthetic process"/>
    <property type="evidence" value="ECO:0007669"/>
    <property type="project" value="UniProtKB-UniRule"/>
</dbReference>
<dbReference type="CDD" id="cd04728">
    <property type="entry name" value="ThiG"/>
    <property type="match status" value="1"/>
</dbReference>
<dbReference type="Gene3D" id="3.20.20.70">
    <property type="entry name" value="Aldolase class I"/>
    <property type="match status" value="1"/>
</dbReference>
<dbReference type="HAMAP" id="MF_00443">
    <property type="entry name" value="ThiG"/>
    <property type="match status" value="1"/>
</dbReference>
<dbReference type="InterPro" id="IPR013785">
    <property type="entry name" value="Aldolase_TIM"/>
</dbReference>
<dbReference type="InterPro" id="IPR033983">
    <property type="entry name" value="Thiazole_synthase_ThiG"/>
</dbReference>
<dbReference type="InterPro" id="IPR008867">
    <property type="entry name" value="ThiG"/>
</dbReference>
<dbReference type="PANTHER" id="PTHR34266">
    <property type="entry name" value="THIAZOLE SYNTHASE"/>
    <property type="match status" value="1"/>
</dbReference>
<dbReference type="PANTHER" id="PTHR34266:SF2">
    <property type="entry name" value="THIAZOLE SYNTHASE"/>
    <property type="match status" value="1"/>
</dbReference>
<dbReference type="Pfam" id="PF05690">
    <property type="entry name" value="ThiG"/>
    <property type="match status" value="1"/>
</dbReference>
<dbReference type="SUPFAM" id="SSF110399">
    <property type="entry name" value="ThiG-like"/>
    <property type="match status" value="1"/>
</dbReference>
<comment type="function">
    <text evidence="1">Catalyzes the rearrangement of 1-deoxy-D-xylulose 5-phosphate (DXP) to produce the thiazole phosphate moiety of thiamine. Sulfur is provided by the thiocarboxylate moiety of the carrier protein ThiS. In vitro, sulfur can be provided by H(2)S.</text>
</comment>
<comment type="catalytic activity">
    <reaction evidence="1">
        <text>[ThiS sulfur-carrier protein]-C-terminal-Gly-aminoethanethioate + 2-iminoacetate + 1-deoxy-D-xylulose 5-phosphate = [ThiS sulfur-carrier protein]-C-terminal Gly-Gly + 2-[(2R,5Z)-2-carboxy-4-methylthiazol-5(2H)-ylidene]ethyl phosphate + 2 H2O + H(+)</text>
        <dbReference type="Rhea" id="RHEA:26297"/>
        <dbReference type="Rhea" id="RHEA-COMP:12909"/>
        <dbReference type="Rhea" id="RHEA-COMP:19908"/>
        <dbReference type="ChEBI" id="CHEBI:15377"/>
        <dbReference type="ChEBI" id="CHEBI:15378"/>
        <dbReference type="ChEBI" id="CHEBI:57792"/>
        <dbReference type="ChEBI" id="CHEBI:62899"/>
        <dbReference type="ChEBI" id="CHEBI:77846"/>
        <dbReference type="ChEBI" id="CHEBI:90778"/>
        <dbReference type="ChEBI" id="CHEBI:232372"/>
        <dbReference type="EC" id="2.8.1.10"/>
    </reaction>
</comment>
<comment type="pathway">
    <text evidence="1">Cofactor biosynthesis; thiamine diphosphate biosynthesis.</text>
</comment>
<comment type="subunit">
    <text evidence="1">Homotetramer. Forms heterodimers with either ThiH or ThiS.</text>
</comment>
<comment type="subcellular location">
    <subcellularLocation>
        <location evidence="1">Cytoplasm</location>
    </subcellularLocation>
</comment>
<comment type="similarity">
    <text evidence="1">Belongs to the ThiG family.</text>
</comment>
<proteinExistence type="inferred from homology"/>
<reference key="1">
    <citation type="journal article" date="2004" name="Proc. Natl. Acad. Sci. U.S.A.">
        <title>Structural flexibility in the Burkholderia mallei genome.</title>
        <authorList>
            <person name="Nierman W.C."/>
            <person name="DeShazer D."/>
            <person name="Kim H.S."/>
            <person name="Tettelin H."/>
            <person name="Nelson K.E."/>
            <person name="Feldblyum T.V."/>
            <person name="Ulrich R.L."/>
            <person name="Ronning C.M."/>
            <person name="Brinkac L.M."/>
            <person name="Daugherty S.C."/>
            <person name="Davidsen T.D."/>
            <person name="DeBoy R.T."/>
            <person name="Dimitrov G."/>
            <person name="Dodson R.J."/>
            <person name="Durkin A.S."/>
            <person name="Gwinn M.L."/>
            <person name="Haft D.H."/>
            <person name="Khouri H.M."/>
            <person name="Kolonay J.F."/>
            <person name="Madupu R."/>
            <person name="Mohammoud Y."/>
            <person name="Nelson W.C."/>
            <person name="Radune D."/>
            <person name="Romero C.M."/>
            <person name="Sarria S."/>
            <person name="Selengut J."/>
            <person name="Shamblin C."/>
            <person name="Sullivan S.A."/>
            <person name="White O."/>
            <person name="Yu Y."/>
            <person name="Zafar N."/>
            <person name="Zhou L."/>
            <person name="Fraser C.M."/>
        </authorList>
    </citation>
    <scope>NUCLEOTIDE SEQUENCE [LARGE SCALE GENOMIC DNA]</scope>
    <source>
        <strain>ATCC 23344</strain>
    </source>
</reference>
<feature type="chain" id="PRO_0000162799" description="Thiazole synthase">
    <location>
        <begin position="1"/>
        <end position="271"/>
    </location>
</feature>
<feature type="active site" description="Schiff-base intermediate with DXP" evidence="1">
    <location>
        <position position="104"/>
    </location>
</feature>
<feature type="binding site" evidence="1">
    <location>
        <position position="165"/>
    </location>
    <ligand>
        <name>1-deoxy-D-xylulose 5-phosphate</name>
        <dbReference type="ChEBI" id="CHEBI:57792"/>
    </ligand>
</feature>
<feature type="binding site" evidence="1">
    <location>
        <begin position="192"/>
        <end position="193"/>
    </location>
    <ligand>
        <name>1-deoxy-D-xylulose 5-phosphate</name>
        <dbReference type="ChEBI" id="CHEBI:57792"/>
    </ligand>
</feature>
<feature type="binding site" evidence="1">
    <location>
        <begin position="214"/>
        <end position="215"/>
    </location>
    <ligand>
        <name>1-deoxy-D-xylulose 5-phosphate</name>
        <dbReference type="ChEBI" id="CHEBI:57792"/>
    </ligand>
</feature>
<evidence type="ECO:0000255" key="1">
    <source>
        <dbReference type="HAMAP-Rule" id="MF_00443"/>
    </source>
</evidence>
<keyword id="KW-0963">Cytoplasm</keyword>
<keyword id="KW-1185">Reference proteome</keyword>
<keyword id="KW-0704">Schiff base</keyword>
<keyword id="KW-0784">Thiamine biosynthesis</keyword>
<keyword id="KW-0808">Transferase</keyword>
<accession>Q62GC6</accession>
<organism>
    <name type="scientific">Burkholderia mallei (strain ATCC 23344)</name>
    <dbReference type="NCBI Taxonomy" id="243160"/>
    <lineage>
        <taxon>Bacteria</taxon>
        <taxon>Pseudomonadati</taxon>
        <taxon>Pseudomonadota</taxon>
        <taxon>Betaproteobacteria</taxon>
        <taxon>Burkholderiales</taxon>
        <taxon>Burkholderiaceae</taxon>
        <taxon>Burkholderia</taxon>
        <taxon>pseudomallei group</taxon>
    </lineage>
</organism>
<sequence>MTPLSSADTLTLHGQTFASRVLLGTSRYPSLQSLSDSIAAARPGMVTVALRRQMNAGAAEAGFFELLKRHDVPLLPNTAGCQTIAEAVTTAQMAREVFETDWIKLELIGDDYTLQPDPVGLIEAATLLVKDGFKVLPYCTEDLVIARRLLDAGCEALMPWGAPIGTGKGIVNPYGLRVLRERLPDVPLIVDAGLGVPSHACQVMEWGFDGVLLNTAVSQATHPEIMARAFARGVEAGRAAYLAGPMDARESAHASTPVVGMPFWHQDGSHA</sequence>